<gene>
    <name type="primary">fba</name>
    <name type="synonym">fda</name>
    <name type="synonym">fdaC</name>
    <name type="ordered locus">Cj0597</name>
</gene>
<organism>
    <name type="scientific">Campylobacter jejuni subsp. jejuni serotype O:2 (strain ATCC 700819 / NCTC 11168)</name>
    <dbReference type="NCBI Taxonomy" id="192222"/>
    <lineage>
        <taxon>Bacteria</taxon>
        <taxon>Pseudomonadati</taxon>
        <taxon>Campylobacterota</taxon>
        <taxon>Epsilonproteobacteria</taxon>
        <taxon>Campylobacterales</taxon>
        <taxon>Campylobacteraceae</taxon>
        <taxon>Campylobacter</taxon>
    </lineage>
</organism>
<reference key="1">
    <citation type="journal article" date="2000" name="Nature">
        <title>The genome sequence of the food-borne pathogen Campylobacter jejuni reveals hypervariable sequences.</title>
        <authorList>
            <person name="Parkhill J."/>
            <person name="Wren B.W."/>
            <person name="Mungall K.L."/>
            <person name="Ketley J.M."/>
            <person name="Churcher C.M."/>
            <person name="Basham D."/>
            <person name="Chillingworth T."/>
            <person name="Davies R.M."/>
            <person name="Feltwell T."/>
            <person name="Holroyd S."/>
            <person name="Jagels K."/>
            <person name="Karlyshev A.V."/>
            <person name="Moule S."/>
            <person name="Pallen M.J."/>
            <person name="Penn C.W."/>
            <person name="Quail M.A."/>
            <person name="Rajandream M.A."/>
            <person name="Rutherford K.M."/>
            <person name="van Vliet A.H.M."/>
            <person name="Whitehead S."/>
            <person name="Barrell B.G."/>
        </authorList>
    </citation>
    <scope>NUCLEOTIDE SEQUENCE [LARGE SCALE GENOMIC DNA]</scope>
    <source>
        <strain>ATCC 700819 / NCTC 11168</strain>
    </source>
</reference>
<comment type="function">
    <text evidence="1">Catalyzes the aldol condensation of dihydroxyacetone phosphate (DHAP or glycerone-phosphate) with glyceraldehyde 3-phosphate (G3P) to form fructose 1,6-bisphosphate (FBP) in gluconeogenesis and the reverse reaction in glycolysis.</text>
</comment>
<comment type="catalytic activity">
    <reaction>
        <text>beta-D-fructose 1,6-bisphosphate = D-glyceraldehyde 3-phosphate + dihydroxyacetone phosphate</text>
        <dbReference type="Rhea" id="RHEA:14729"/>
        <dbReference type="ChEBI" id="CHEBI:32966"/>
        <dbReference type="ChEBI" id="CHEBI:57642"/>
        <dbReference type="ChEBI" id="CHEBI:59776"/>
        <dbReference type="EC" id="4.1.2.13"/>
    </reaction>
</comment>
<comment type="cofactor">
    <cofactor evidence="1">
        <name>Zn(2+)</name>
        <dbReference type="ChEBI" id="CHEBI:29105"/>
    </cofactor>
    <text evidence="1">Binds 2 Zn(2+) ions per subunit. One is catalytic and the other provides a structural contribution.</text>
</comment>
<comment type="pathway">
    <text>Carbohydrate degradation; glycolysis; D-glyceraldehyde 3-phosphate and glycerone phosphate from D-glucose: step 4/4.</text>
</comment>
<comment type="subunit">
    <text evidence="1">Homodimer.</text>
</comment>
<comment type="similarity">
    <text evidence="2">Belongs to the class II fructose-bisphosphate aldolase family.</text>
</comment>
<name>ALF_CAMJE</name>
<dbReference type="EC" id="4.1.2.13"/>
<dbReference type="EMBL" id="AL111168">
    <property type="protein sequence ID" value="CAL34743.1"/>
    <property type="molecule type" value="Genomic_DNA"/>
</dbReference>
<dbReference type="PIR" id="S52413">
    <property type="entry name" value="S52413"/>
</dbReference>
<dbReference type="RefSeq" id="YP_002344027.1">
    <property type="nucleotide sequence ID" value="NC_002163.1"/>
</dbReference>
<dbReference type="PDB" id="3QM3">
    <property type="method" value="X-ray"/>
    <property type="resolution" value="1.85 A"/>
    <property type="chains" value="A/B/C/D/E/F/G/H=1-354"/>
</dbReference>
<dbReference type="PDBsum" id="3QM3"/>
<dbReference type="SMR" id="Q0PAS0"/>
<dbReference type="IntAct" id="Q0PAS0">
    <property type="interactions" value="9"/>
</dbReference>
<dbReference type="STRING" id="192222.Cj0597"/>
<dbReference type="PaxDb" id="192222-Cj0597"/>
<dbReference type="EnsemblBacteria" id="CAL34743">
    <property type="protein sequence ID" value="CAL34743"/>
    <property type="gene ID" value="Cj0597"/>
</dbReference>
<dbReference type="GeneID" id="904922"/>
<dbReference type="KEGG" id="cje:Cj0597"/>
<dbReference type="PATRIC" id="fig|192222.6.peg.589"/>
<dbReference type="eggNOG" id="COG0191">
    <property type="taxonomic scope" value="Bacteria"/>
</dbReference>
<dbReference type="HOGENOM" id="CLU_036923_0_0_7"/>
<dbReference type="OrthoDB" id="9803995at2"/>
<dbReference type="UniPathway" id="UPA00109">
    <property type="reaction ID" value="UER00183"/>
</dbReference>
<dbReference type="EvolutionaryTrace" id="Q0PAS0"/>
<dbReference type="Proteomes" id="UP000000799">
    <property type="component" value="Chromosome"/>
</dbReference>
<dbReference type="GO" id="GO:0005829">
    <property type="term" value="C:cytosol"/>
    <property type="evidence" value="ECO:0007669"/>
    <property type="project" value="TreeGrafter"/>
</dbReference>
<dbReference type="GO" id="GO:0004332">
    <property type="term" value="F:fructose-bisphosphate aldolase activity"/>
    <property type="evidence" value="ECO:0007669"/>
    <property type="project" value="UniProtKB-EC"/>
</dbReference>
<dbReference type="GO" id="GO:0008270">
    <property type="term" value="F:zinc ion binding"/>
    <property type="evidence" value="ECO:0007669"/>
    <property type="project" value="InterPro"/>
</dbReference>
<dbReference type="GO" id="GO:0006094">
    <property type="term" value="P:gluconeogenesis"/>
    <property type="evidence" value="ECO:0007669"/>
    <property type="project" value="TreeGrafter"/>
</dbReference>
<dbReference type="GO" id="GO:0006096">
    <property type="term" value="P:glycolytic process"/>
    <property type="evidence" value="ECO:0007669"/>
    <property type="project" value="UniProtKB-UniPathway"/>
</dbReference>
<dbReference type="CDD" id="cd00946">
    <property type="entry name" value="FBP_aldolase_IIA"/>
    <property type="match status" value="1"/>
</dbReference>
<dbReference type="FunFam" id="3.20.20.70:FF:000013">
    <property type="entry name" value="Class II fructose-bisphosphate aldolase"/>
    <property type="match status" value="1"/>
</dbReference>
<dbReference type="Gene3D" id="3.20.20.70">
    <property type="entry name" value="Aldolase class I"/>
    <property type="match status" value="1"/>
</dbReference>
<dbReference type="InterPro" id="IPR013785">
    <property type="entry name" value="Aldolase_TIM"/>
</dbReference>
<dbReference type="InterPro" id="IPR000771">
    <property type="entry name" value="FBA_II"/>
</dbReference>
<dbReference type="InterPro" id="IPR006411">
    <property type="entry name" value="Fruct_bisP_bact"/>
</dbReference>
<dbReference type="NCBIfam" id="TIGR00167">
    <property type="entry name" value="cbbA"/>
    <property type="match status" value="1"/>
</dbReference>
<dbReference type="NCBIfam" id="TIGR01520">
    <property type="entry name" value="FruBisAldo_II_A"/>
    <property type="match status" value="1"/>
</dbReference>
<dbReference type="NCBIfam" id="NF006628">
    <property type="entry name" value="PRK09197.1"/>
    <property type="match status" value="1"/>
</dbReference>
<dbReference type="PANTHER" id="PTHR30559:SF0">
    <property type="entry name" value="FRUCTOSE-BISPHOSPHATE ALDOLASE"/>
    <property type="match status" value="1"/>
</dbReference>
<dbReference type="PANTHER" id="PTHR30559">
    <property type="entry name" value="FRUCTOSE-BISPHOSPHATE ALDOLASE CLASS 2"/>
    <property type="match status" value="1"/>
</dbReference>
<dbReference type="Pfam" id="PF01116">
    <property type="entry name" value="F_bP_aldolase"/>
    <property type="match status" value="1"/>
</dbReference>
<dbReference type="PIRSF" id="PIRSF001359">
    <property type="entry name" value="F_bP_aldolase_II"/>
    <property type="match status" value="1"/>
</dbReference>
<dbReference type="SUPFAM" id="SSF51569">
    <property type="entry name" value="Aldolase"/>
    <property type="match status" value="1"/>
</dbReference>
<dbReference type="PROSITE" id="PS00602">
    <property type="entry name" value="ALDOLASE_CLASS_II_1"/>
    <property type="match status" value="1"/>
</dbReference>
<dbReference type="PROSITE" id="PS00806">
    <property type="entry name" value="ALDOLASE_CLASS_II_2"/>
    <property type="match status" value="1"/>
</dbReference>
<protein>
    <recommendedName>
        <fullName>Fructose-bisphosphate aldolase</fullName>
        <shortName>FBP aldolase</shortName>
        <shortName>FBPA</shortName>
        <ecNumber>4.1.2.13</ecNumber>
    </recommendedName>
    <alternativeName>
        <fullName>Fructose-1,6-bisphosphate aldolase</fullName>
    </alternativeName>
</protein>
<proteinExistence type="evidence at protein level"/>
<sequence>MGVLDIVKAGVISGDELNKIYDYAKAEGFAIPAVNVVGTDSINAVLEAAKKVNSPVIIQFSNGGAKFYAGKNCPNGEVLGAISGAKHVHLLAKAYGVPVILHTDHAARKLLPWIDGLIEANAQYKKTHGQALFSSHMLDLSEESLEENLSTCEVYLQKLDALGVALEIELGCTGGEEDGVDNTGIDNSKLYTQPEDVALAYERLGKISDKFSIAASFGNVHGVYKPGNVSLQPEILKNSQKFVKDKFALNSDKPINFVFHGGSGSELKDIKNAVSYGVIKMNIDTDTQWAFWDGVREYELKNRAYLQGQIGNPEGDDKPNKKYYDPRVWLRSGEESMIKRLEIAFEDLNCINKN</sequence>
<keyword id="KW-0002">3D-structure</keyword>
<keyword id="KW-0324">Glycolysis</keyword>
<keyword id="KW-0456">Lyase</keyword>
<keyword id="KW-0479">Metal-binding</keyword>
<keyword id="KW-1185">Reference proteome</keyword>
<keyword id="KW-0862">Zinc</keyword>
<feature type="chain" id="PRO_0000178711" description="Fructose-bisphosphate aldolase">
    <location>
        <begin position="1"/>
        <end position="354"/>
    </location>
</feature>
<feature type="active site" description="Proton donor" evidence="1">
    <location>
        <position position="104"/>
    </location>
</feature>
<feature type="binding site" evidence="1">
    <location>
        <position position="61"/>
    </location>
    <ligand>
        <name>D-glyceraldehyde 3-phosphate</name>
        <dbReference type="ChEBI" id="CHEBI:59776"/>
    </ligand>
</feature>
<feature type="binding site" evidence="1">
    <location>
        <position position="105"/>
    </location>
    <ligand>
        <name>Zn(2+)</name>
        <dbReference type="ChEBI" id="CHEBI:29105"/>
        <label>1</label>
        <note>catalytic</note>
    </ligand>
</feature>
<feature type="binding site" evidence="1">
    <location>
        <position position="139"/>
    </location>
    <ligand>
        <name>Zn(2+)</name>
        <dbReference type="ChEBI" id="CHEBI:29105"/>
        <label>2</label>
    </ligand>
</feature>
<feature type="binding site" evidence="1">
    <location>
        <position position="169"/>
    </location>
    <ligand>
        <name>Zn(2+)</name>
        <dbReference type="ChEBI" id="CHEBI:29105"/>
        <label>2</label>
    </ligand>
</feature>
<feature type="binding site" evidence="1">
    <location>
        <position position="221"/>
    </location>
    <ligand>
        <name>Zn(2+)</name>
        <dbReference type="ChEBI" id="CHEBI:29105"/>
        <label>1</label>
        <note>catalytic</note>
    </ligand>
</feature>
<feature type="binding site" evidence="1">
    <location>
        <position position="222"/>
    </location>
    <ligand>
        <name>dihydroxyacetone phosphate</name>
        <dbReference type="ChEBI" id="CHEBI:57642"/>
    </ligand>
</feature>
<feature type="binding site" evidence="1">
    <location>
        <position position="260"/>
    </location>
    <ligand>
        <name>Zn(2+)</name>
        <dbReference type="ChEBI" id="CHEBI:29105"/>
        <label>1</label>
        <note>catalytic</note>
    </ligand>
</feature>
<feature type="binding site" evidence="1">
    <location>
        <begin position="261"/>
        <end position="263"/>
    </location>
    <ligand>
        <name>dihydroxyacetone phosphate</name>
        <dbReference type="ChEBI" id="CHEBI:57642"/>
    </ligand>
</feature>
<feature type="binding site" evidence="1">
    <location>
        <begin position="282"/>
        <end position="285"/>
    </location>
    <ligand>
        <name>dihydroxyacetone phosphate</name>
        <dbReference type="ChEBI" id="CHEBI:57642"/>
    </ligand>
</feature>
<feature type="helix" evidence="3">
    <location>
        <begin position="3"/>
        <end position="5"/>
    </location>
</feature>
<feature type="strand" evidence="3">
    <location>
        <begin position="9"/>
        <end position="11"/>
    </location>
</feature>
<feature type="helix" evidence="3">
    <location>
        <begin position="14"/>
        <end position="16"/>
    </location>
</feature>
<feature type="helix" evidence="3">
    <location>
        <begin position="17"/>
        <end position="27"/>
    </location>
</feature>
<feature type="strand" evidence="3">
    <location>
        <begin position="31"/>
        <end position="35"/>
    </location>
</feature>
<feature type="helix" evidence="3">
    <location>
        <begin position="39"/>
        <end position="52"/>
    </location>
</feature>
<feature type="strand" evidence="3">
    <location>
        <begin position="56"/>
        <end position="60"/>
    </location>
</feature>
<feature type="helix" evidence="3">
    <location>
        <begin position="62"/>
        <end position="69"/>
    </location>
</feature>
<feature type="helix" evidence="3">
    <location>
        <begin position="76"/>
        <end position="95"/>
    </location>
</feature>
<feature type="strand" evidence="3">
    <location>
        <begin position="98"/>
        <end position="103"/>
    </location>
</feature>
<feature type="helix" evidence="3">
    <location>
        <begin position="108"/>
        <end position="110"/>
    </location>
</feature>
<feature type="helix" evidence="3">
    <location>
        <begin position="111"/>
        <end position="128"/>
    </location>
</feature>
<feature type="strand" evidence="3">
    <location>
        <begin position="134"/>
        <end position="137"/>
    </location>
</feature>
<feature type="helix" evidence="3">
    <location>
        <begin position="145"/>
        <end position="161"/>
    </location>
</feature>
<feature type="strand" evidence="3">
    <location>
        <begin position="165"/>
        <end position="169"/>
    </location>
</feature>
<feature type="turn" evidence="3">
    <location>
        <begin position="188"/>
        <end position="190"/>
    </location>
</feature>
<feature type="helix" evidence="3">
    <location>
        <begin position="194"/>
        <end position="204"/>
    </location>
</feature>
<feature type="turn" evidence="3">
    <location>
        <begin position="205"/>
        <end position="207"/>
    </location>
</feature>
<feature type="strand" evidence="3">
    <location>
        <begin position="211"/>
        <end position="214"/>
    </location>
</feature>
<feature type="helix" evidence="3">
    <location>
        <begin position="234"/>
        <end position="246"/>
    </location>
</feature>
<feature type="strand" evidence="3">
    <location>
        <begin position="257"/>
        <end position="259"/>
    </location>
</feature>
<feature type="helix" evidence="3">
    <location>
        <begin position="267"/>
        <end position="275"/>
    </location>
</feature>
<feature type="strand" evidence="3">
    <location>
        <begin position="278"/>
        <end position="283"/>
    </location>
</feature>
<feature type="helix" evidence="3">
    <location>
        <begin position="285"/>
        <end position="302"/>
    </location>
</feature>
<feature type="helix" evidence="3">
    <location>
        <begin position="303"/>
        <end position="305"/>
    </location>
</feature>
<feature type="strand" evidence="3">
    <location>
        <begin position="306"/>
        <end position="312"/>
    </location>
</feature>
<feature type="strand" evidence="3">
    <location>
        <begin position="315"/>
        <end position="319"/>
    </location>
</feature>
<feature type="helix" evidence="3">
    <location>
        <begin position="321"/>
        <end position="324"/>
    </location>
</feature>
<feature type="helix" evidence="3">
    <location>
        <begin position="326"/>
        <end position="347"/>
    </location>
</feature>
<evidence type="ECO:0000250" key="1"/>
<evidence type="ECO:0000305" key="2"/>
<evidence type="ECO:0007829" key="3">
    <source>
        <dbReference type="PDB" id="3QM3"/>
    </source>
</evidence>
<accession>Q0PAS0</accession>
<accession>P53818</accession>